<dbReference type="EC" id="4.2.1.33" evidence="1"/>
<dbReference type="EMBL" id="CP001392">
    <property type="protein sequence ID" value="ACM34020.1"/>
    <property type="molecule type" value="Genomic_DNA"/>
</dbReference>
<dbReference type="RefSeq" id="WP_011806353.1">
    <property type="nucleotide sequence ID" value="NC_011992.1"/>
</dbReference>
<dbReference type="SMR" id="B9MDL1"/>
<dbReference type="GeneID" id="84680664"/>
<dbReference type="KEGG" id="dia:Dtpsy_2585"/>
<dbReference type="eggNOG" id="COG0066">
    <property type="taxonomic scope" value="Bacteria"/>
</dbReference>
<dbReference type="HOGENOM" id="CLU_081378_0_3_4"/>
<dbReference type="UniPathway" id="UPA00048">
    <property type="reaction ID" value="UER00071"/>
</dbReference>
<dbReference type="Proteomes" id="UP000000450">
    <property type="component" value="Chromosome"/>
</dbReference>
<dbReference type="GO" id="GO:0009316">
    <property type="term" value="C:3-isopropylmalate dehydratase complex"/>
    <property type="evidence" value="ECO:0007669"/>
    <property type="project" value="InterPro"/>
</dbReference>
<dbReference type="GO" id="GO:0003861">
    <property type="term" value="F:3-isopropylmalate dehydratase activity"/>
    <property type="evidence" value="ECO:0007669"/>
    <property type="project" value="UniProtKB-UniRule"/>
</dbReference>
<dbReference type="GO" id="GO:0009098">
    <property type="term" value="P:L-leucine biosynthetic process"/>
    <property type="evidence" value="ECO:0007669"/>
    <property type="project" value="UniProtKB-UniRule"/>
</dbReference>
<dbReference type="CDD" id="cd01577">
    <property type="entry name" value="IPMI_Swivel"/>
    <property type="match status" value="1"/>
</dbReference>
<dbReference type="FunFam" id="3.20.19.10:FF:000003">
    <property type="entry name" value="3-isopropylmalate dehydratase small subunit"/>
    <property type="match status" value="1"/>
</dbReference>
<dbReference type="Gene3D" id="3.20.19.10">
    <property type="entry name" value="Aconitase, domain 4"/>
    <property type="match status" value="1"/>
</dbReference>
<dbReference type="HAMAP" id="MF_01031">
    <property type="entry name" value="LeuD_type1"/>
    <property type="match status" value="1"/>
</dbReference>
<dbReference type="InterPro" id="IPR004431">
    <property type="entry name" value="3-IsopropMal_deHydase_ssu"/>
</dbReference>
<dbReference type="InterPro" id="IPR015928">
    <property type="entry name" value="Aconitase/3IPM_dehydase_swvl"/>
</dbReference>
<dbReference type="InterPro" id="IPR000573">
    <property type="entry name" value="AconitaseA/IPMdHydase_ssu_swvl"/>
</dbReference>
<dbReference type="InterPro" id="IPR033940">
    <property type="entry name" value="IPMI_Swivel"/>
</dbReference>
<dbReference type="InterPro" id="IPR050075">
    <property type="entry name" value="LeuD"/>
</dbReference>
<dbReference type="NCBIfam" id="TIGR00171">
    <property type="entry name" value="leuD"/>
    <property type="match status" value="1"/>
</dbReference>
<dbReference type="NCBIfam" id="NF002458">
    <property type="entry name" value="PRK01641.1"/>
    <property type="match status" value="1"/>
</dbReference>
<dbReference type="PANTHER" id="PTHR43345:SF5">
    <property type="entry name" value="3-ISOPROPYLMALATE DEHYDRATASE SMALL SUBUNIT"/>
    <property type="match status" value="1"/>
</dbReference>
<dbReference type="PANTHER" id="PTHR43345">
    <property type="entry name" value="3-ISOPROPYLMALATE DEHYDRATASE SMALL SUBUNIT 2-RELATED-RELATED"/>
    <property type="match status" value="1"/>
</dbReference>
<dbReference type="Pfam" id="PF00694">
    <property type="entry name" value="Aconitase_C"/>
    <property type="match status" value="1"/>
</dbReference>
<dbReference type="SUPFAM" id="SSF52016">
    <property type="entry name" value="LeuD/IlvD-like"/>
    <property type="match status" value="1"/>
</dbReference>
<accession>B9MDL1</accession>
<reference key="1">
    <citation type="submission" date="2009-01" db="EMBL/GenBank/DDBJ databases">
        <title>Complete sequence of Diaphorobacter sp. TPSY.</title>
        <authorList>
            <consortium name="US DOE Joint Genome Institute"/>
            <person name="Lucas S."/>
            <person name="Copeland A."/>
            <person name="Lapidus A."/>
            <person name="Glavina del Rio T."/>
            <person name="Tice H."/>
            <person name="Bruce D."/>
            <person name="Goodwin L."/>
            <person name="Pitluck S."/>
            <person name="Chertkov O."/>
            <person name="Brettin T."/>
            <person name="Detter J.C."/>
            <person name="Han C."/>
            <person name="Larimer F."/>
            <person name="Land M."/>
            <person name="Hauser L."/>
            <person name="Kyrpides N."/>
            <person name="Mikhailova N."/>
            <person name="Coates J.D."/>
        </authorList>
    </citation>
    <scope>NUCLEOTIDE SEQUENCE [LARGE SCALE GENOMIC DNA]</scope>
    <source>
        <strain>TPSY</strain>
    </source>
</reference>
<protein>
    <recommendedName>
        <fullName evidence="1">3-isopropylmalate dehydratase small subunit</fullName>
        <ecNumber evidence="1">4.2.1.33</ecNumber>
    </recommendedName>
    <alternativeName>
        <fullName evidence="1">Alpha-IPM isomerase</fullName>
        <shortName evidence="1">IPMI</shortName>
    </alternativeName>
    <alternativeName>
        <fullName evidence="1">Isopropylmalate isomerase</fullName>
    </alternativeName>
</protein>
<evidence type="ECO:0000255" key="1">
    <source>
        <dbReference type="HAMAP-Rule" id="MF_01031"/>
    </source>
</evidence>
<gene>
    <name evidence="1" type="primary">leuD</name>
    <name type="ordered locus">Dtpsy_2585</name>
</gene>
<comment type="function">
    <text evidence="1">Catalyzes the isomerization between 2-isopropylmalate and 3-isopropylmalate, via the formation of 2-isopropylmaleate.</text>
</comment>
<comment type="catalytic activity">
    <reaction evidence="1">
        <text>(2R,3S)-3-isopropylmalate = (2S)-2-isopropylmalate</text>
        <dbReference type="Rhea" id="RHEA:32287"/>
        <dbReference type="ChEBI" id="CHEBI:1178"/>
        <dbReference type="ChEBI" id="CHEBI:35121"/>
        <dbReference type="EC" id="4.2.1.33"/>
    </reaction>
</comment>
<comment type="pathway">
    <text evidence="1">Amino-acid biosynthesis; L-leucine biosynthesis; L-leucine from 3-methyl-2-oxobutanoate: step 2/4.</text>
</comment>
<comment type="subunit">
    <text evidence="1">Heterodimer of LeuC and LeuD.</text>
</comment>
<comment type="similarity">
    <text evidence="1">Belongs to the LeuD family. LeuD type 1 subfamily.</text>
</comment>
<sequence length="216" mass="24383">MQKFTLHKGLVAPMDRENVDTDAIIPKQFLKSIKKTGFGPNLFDEWRYLDKGEPGVPESQRKPNPDFVLNQPRYQGASILLARKNFGCGSSREHAPWALDQYGFRAIIAPSFADIFFNNCFKNGLLPIVLPEATVDQLFNEAAAFPGYQLTVDLERQVVVRPQGEEIPFDVVPFRKYCLLNGFDDIGLTLRHADKIRAFEAARLASKPWLSHTMAA</sequence>
<keyword id="KW-0028">Amino-acid biosynthesis</keyword>
<keyword id="KW-0100">Branched-chain amino acid biosynthesis</keyword>
<keyword id="KW-0432">Leucine biosynthesis</keyword>
<keyword id="KW-0456">Lyase</keyword>
<keyword id="KW-1185">Reference proteome</keyword>
<name>LEUD_ACIET</name>
<organism>
    <name type="scientific">Acidovorax ebreus (strain TPSY)</name>
    <name type="common">Diaphorobacter sp. (strain TPSY)</name>
    <dbReference type="NCBI Taxonomy" id="535289"/>
    <lineage>
        <taxon>Bacteria</taxon>
        <taxon>Pseudomonadati</taxon>
        <taxon>Pseudomonadota</taxon>
        <taxon>Betaproteobacteria</taxon>
        <taxon>Burkholderiales</taxon>
        <taxon>Comamonadaceae</taxon>
        <taxon>Diaphorobacter</taxon>
    </lineage>
</organism>
<proteinExistence type="inferred from homology"/>
<feature type="chain" id="PRO_1000149411" description="3-isopropylmalate dehydratase small subunit">
    <location>
        <begin position="1"/>
        <end position="216"/>
    </location>
</feature>